<comment type="function">
    <text evidence="1">Negative regulator of epidermal growth factor receptor (EGFR) signaling.</text>
</comment>
<comment type="similarity">
    <text evidence="4">Belongs to the lst-2 family.</text>
</comment>
<accession>B4JHI7</accession>
<organism>
    <name type="scientific">Drosophila grimshawi</name>
    <name type="common">Hawaiian fruit fly</name>
    <name type="synonym">Idiomyia grimshawi</name>
    <dbReference type="NCBI Taxonomy" id="7222"/>
    <lineage>
        <taxon>Eukaryota</taxon>
        <taxon>Metazoa</taxon>
        <taxon>Ecdysozoa</taxon>
        <taxon>Arthropoda</taxon>
        <taxon>Hexapoda</taxon>
        <taxon>Insecta</taxon>
        <taxon>Pterygota</taxon>
        <taxon>Neoptera</taxon>
        <taxon>Endopterygota</taxon>
        <taxon>Diptera</taxon>
        <taxon>Brachycera</taxon>
        <taxon>Muscomorpha</taxon>
        <taxon>Ephydroidea</taxon>
        <taxon>Drosophilidae</taxon>
        <taxon>Drosophila</taxon>
        <taxon>Hawaiian Drosophila</taxon>
    </lineage>
</organism>
<protein>
    <recommendedName>
        <fullName>Lateral signaling target protein 2 homolog</fullName>
    </recommendedName>
</protein>
<keyword id="KW-0479">Metal-binding</keyword>
<keyword id="KW-0597">Phosphoprotein</keyword>
<keyword id="KW-1185">Reference proteome</keyword>
<keyword id="KW-0862">Zinc</keyword>
<keyword id="KW-0863">Zinc-finger</keyword>
<reference key="1">
    <citation type="journal article" date="2007" name="Nature">
        <title>Evolution of genes and genomes on the Drosophila phylogeny.</title>
        <authorList>
            <consortium name="Drosophila 12 genomes consortium"/>
        </authorList>
    </citation>
    <scope>NUCLEOTIDE SEQUENCE [LARGE SCALE GENOMIC DNA]</scope>
    <source>
        <strain>Tucson 15287-2541.00</strain>
    </source>
</reference>
<feature type="chain" id="PRO_0000378964" description="Lateral signaling target protein 2 homolog">
    <location>
        <begin position="1"/>
        <end position="1115"/>
    </location>
</feature>
<feature type="zinc finger region" description="FYVE-type" evidence="2">
    <location>
        <begin position="1025"/>
        <end position="1085"/>
    </location>
</feature>
<feature type="region of interest" description="Disordered" evidence="3">
    <location>
        <begin position="308"/>
        <end position="488"/>
    </location>
</feature>
<feature type="region of interest" description="Disordered" evidence="3">
    <location>
        <begin position="545"/>
        <end position="586"/>
    </location>
</feature>
<feature type="region of interest" description="Disordered" evidence="3">
    <location>
        <begin position="600"/>
        <end position="742"/>
    </location>
</feature>
<feature type="region of interest" description="Disordered" evidence="3">
    <location>
        <begin position="879"/>
        <end position="1027"/>
    </location>
</feature>
<feature type="region of interest" description="Disordered" evidence="3">
    <location>
        <begin position="1088"/>
        <end position="1115"/>
    </location>
</feature>
<feature type="compositionally biased region" description="Low complexity" evidence="3">
    <location>
        <begin position="322"/>
        <end position="361"/>
    </location>
</feature>
<feature type="compositionally biased region" description="Basic and acidic residues" evidence="3">
    <location>
        <begin position="363"/>
        <end position="373"/>
    </location>
</feature>
<feature type="compositionally biased region" description="Low complexity" evidence="3">
    <location>
        <begin position="374"/>
        <end position="417"/>
    </location>
</feature>
<feature type="compositionally biased region" description="Low complexity" evidence="3">
    <location>
        <begin position="425"/>
        <end position="444"/>
    </location>
</feature>
<feature type="compositionally biased region" description="Acidic residues" evidence="3">
    <location>
        <begin position="449"/>
        <end position="488"/>
    </location>
</feature>
<feature type="compositionally biased region" description="Low complexity" evidence="3">
    <location>
        <begin position="558"/>
        <end position="577"/>
    </location>
</feature>
<feature type="compositionally biased region" description="Low complexity" evidence="3">
    <location>
        <begin position="600"/>
        <end position="614"/>
    </location>
</feature>
<feature type="compositionally biased region" description="Polar residues" evidence="3">
    <location>
        <begin position="615"/>
        <end position="628"/>
    </location>
</feature>
<feature type="compositionally biased region" description="Basic residues" evidence="3">
    <location>
        <begin position="632"/>
        <end position="655"/>
    </location>
</feature>
<feature type="compositionally biased region" description="Low complexity" evidence="3">
    <location>
        <begin position="658"/>
        <end position="676"/>
    </location>
</feature>
<feature type="compositionally biased region" description="Basic residues" evidence="3">
    <location>
        <begin position="677"/>
        <end position="706"/>
    </location>
</feature>
<feature type="compositionally biased region" description="Low complexity" evidence="3">
    <location>
        <begin position="714"/>
        <end position="726"/>
    </location>
</feature>
<feature type="compositionally biased region" description="Low complexity" evidence="3">
    <location>
        <begin position="733"/>
        <end position="742"/>
    </location>
</feature>
<feature type="compositionally biased region" description="Low complexity" evidence="3">
    <location>
        <begin position="881"/>
        <end position="901"/>
    </location>
</feature>
<feature type="compositionally biased region" description="Low complexity" evidence="3">
    <location>
        <begin position="921"/>
        <end position="975"/>
    </location>
</feature>
<feature type="compositionally biased region" description="Low complexity" evidence="3">
    <location>
        <begin position="988"/>
        <end position="1020"/>
    </location>
</feature>
<feature type="compositionally biased region" description="Low complexity" evidence="3">
    <location>
        <begin position="1090"/>
        <end position="1100"/>
    </location>
</feature>
<feature type="binding site" evidence="2">
    <location>
        <position position="1031"/>
    </location>
    <ligand>
        <name>Zn(2+)</name>
        <dbReference type="ChEBI" id="CHEBI:29105"/>
        <label>1</label>
    </ligand>
</feature>
<feature type="binding site" evidence="2">
    <location>
        <position position="1034"/>
    </location>
    <ligand>
        <name>Zn(2+)</name>
        <dbReference type="ChEBI" id="CHEBI:29105"/>
        <label>1</label>
    </ligand>
</feature>
<feature type="binding site" evidence="2">
    <location>
        <position position="1047"/>
    </location>
    <ligand>
        <name>Zn(2+)</name>
        <dbReference type="ChEBI" id="CHEBI:29105"/>
        <label>2</label>
    </ligand>
</feature>
<feature type="binding site" evidence="2">
    <location>
        <position position="1050"/>
    </location>
    <ligand>
        <name>Zn(2+)</name>
        <dbReference type="ChEBI" id="CHEBI:29105"/>
        <label>2</label>
    </ligand>
</feature>
<feature type="binding site" evidence="2">
    <location>
        <position position="1055"/>
    </location>
    <ligand>
        <name>Zn(2+)</name>
        <dbReference type="ChEBI" id="CHEBI:29105"/>
        <label>1</label>
    </ligand>
</feature>
<feature type="binding site" evidence="2">
    <location>
        <position position="1058"/>
    </location>
    <ligand>
        <name>Zn(2+)</name>
        <dbReference type="ChEBI" id="CHEBI:29105"/>
        <label>1</label>
    </ligand>
</feature>
<feature type="binding site" evidence="2">
    <location>
        <position position="1077"/>
    </location>
    <ligand>
        <name>Zn(2+)</name>
        <dbReference type="ChEBI" id="CHEBI:29105"/>
        <label>2</label>
    </ligand>
</feature>
<feature type="binding site" evidence="2">
    <location>
        <position position="1080"/>
    </location>
    <ligand>
        <name>Zn(2+)</name>
        <dbReference type="ChEBI" id="CHEBI:29105"/>
        <label>2</label>
    </ligand>
</feature>
<feature type="modified residue" description="Phosphoserine" evidence="1">
    <location>
        <position position="603"/>
    </location>
</feature>
<feature type="modified residue" description="Phosphoserine" evidence="1">
    <location>
        <position position="604"/>
    </location>
</feature>
<feature type="modified residue" description="Phosphoserine" evidence="1">
    <location>
        <position position="908"/>
    </location>
</feature>
<proteinExistence type="inferred from homology"/>
<gene>
    <name type="ORF">GH18624</name>
</gene>
<name>LST2_DROGR</name>
<dbReference type="EMBL" id="CH916369">
    <property type="protein sequence ID" value="EDV92814.1"/>
    <property type="molecule type" value="Genomic_DNA"/>
</dbReference>
<dbReference type="SMR" id="B4JHI7"/>
<dbReference type="FunCoup" id="B4JHI7">
    <property type="interactions" value="180"/>
</dbReference>
<dbReference type="EnsemblMetazoa" id="FBtr0154038">
    <property type="protein sequence ID" value="FBpp0152530"/>
    <property type="gene ID" value="FBgn0126091"/>
</dbReference>
<dbReference type="EnsemblMetazoa" id="XM_001989716.2">
    <property type="protein sequence ID" value="XP_001989752.1"/>
    <property type="gene ID" value="LOC6563666"/>
</dbReference>
<dbReference type="GeneID" id="6563666"/>
<dbReference type="KEGG" id="dgr:6563666"/>
<dbReference type="eggNOG" id="KOG1819">
    <property type="taxonomic scope" value="Eukaryota"/>
</dbReference>
<dbReference type="HOGENOM" id="CLU_007360_1_1_1"/>
<dbReference type="InParanoid" id="B4JHI7"/>
<dbReference type="OMA" id="CYVREVQ"/>
<dbReference type="OrthoDB" id="20035at2759"/>
<dbReference type="PhylomeDB" id="B4JHI7"/>
<dbReference type="Proteomes" id="UP000001070">
    <property type="component" value="Unassembled WGS sequence"/>
</dbReference>
<dbReference type="GO" id="GO:0031901">
    <property type="term" value="C:early endosome membrane"/>
    <property type="evidence" value="ECO:0007669"/>
    <property type="project" value="TreeGrafter"/>
</dbReference>
<dbReference type="GO" id="GO:0008270">
    <property type="term" value="F:zinc ion binding"/>
    <property type="evidence" value="ECO:0007669"/>
    <property type="project" value="UniProtKB-KW"/>
</dbReference>
<dbReference type="CDD" id="cd15731">
    <property type="entry name" value="FYVE_LST2"/>
    <property type="match status" value="1"/>
</dbReference>
<dbReference type="FunFam" id="3.30.40.10:FF:000073">
    <property type="entry name" value="myotubularin-related protein 4 isoform X2"/>
    <property type="match status" value="1"/>
</dbReference>
<dbReference type="Gene3D" id="3.30.40.10">
    <property type="entry name" value="Zinc/RING finger domain, C3HC4 (zinc finger)"/>
    <property type="match status" value="1"/>
</dbReference>
<dbReference type="InterPro" id="IPR043269">
    <property type="entry name" value="FYVE_LST2"/>
</dbReference>
<dbReference type="InterPro" id="IPR051118">
    <property type="entry name" value="LST-2"/>
</dbReference>
<dbReference type="InterPro" id="IPR000306">
    <property type="entry name" value="Znf_FYVE"/>
</dbReference>
<dbReference type="InterPro" id="IPR017455">
    <property type="entry name" value="Znf_FYVE-rel"/>
</dbReference>
<dbReference type="InterPro" id="IPR011011">
    <property type="entry name" value="Znf_FYVE_PHD"/>
</dbReference>
<dbReference type="InterPro" id="IPR013083">
    <property type="entry name" value="Znf_RING/FYVE/PHD"/>
</dbReference>
<dbReference type="PANTHER" id="PTHR46465">
    <property type="entry name" value="LATERAL SIGNALING TARGET PROTEIN 2 HOMOLOG"/>
    <property type="match status" value="1"/>
</dbReference>
<dbReference type="PANTHER" id="PTHR46465:SF2">
    <property type="entry name" value="LATERAL SIGNALING TARGET PROTEIN 2 HOMOLOG"/>
    <property type="match status" value="1"/>
</dbReference>
<dbReference type="Pfam" id="PF01363">
    <property type="entry name" value="FYVE"/>
    <property type="match status" value="1"/>
</dbReference>
<dbReference type="SMART" id="SM00064">
    <property type="entry name" value="FYVE"/>
    <property type="match status" value="1"/>
</dbReference>
<dbReference type="SUPFAM" id="SSF57903">
    <property type="entry name" value="FYVE/PHD zinc finger"/>
    <property type="match status" value="1"/>
</dbReference>
<dbReference type="PROSITE" id="PS50178">
    <property type="entry name" value="ZF_FYVE"/>
    <property type="match status" value="1"/>
</dbReference>
<sequence>MDTFRKWLNKPKADDKSLLARFYHADRSLTAVASELDSFDGRAEPDRCTRLVSRLRQNQDKVLAITNMIMEELLGEDRDPRAFRAKFPEEVLQENLAGQLWFGAECLAAGSSILNRESESKEMRPLAQAVTKSLGHVRVLLRDQCLRNNVPNSKTLHLDFNDSNTEQLYESLKIFDHLFAEFELSYVSAMVQVKSRHEYEMQQWIGVLFSETLQRSLKVGLLDQDMVDAFDPGLMFSIPRLAIVAGLVVYAKGPLNMDMPGDQLSEMFRPFRTILIKIRDLLRNLSKQELYQLEKLLCTNEDINTKVPLGSSSIEAPSPEHNNSSSTTNTSNNNNNNTNNNNSSSGSDCTNNDKTGTTTNTHKPVERLVDHRNNNTTNSQQTSSCSVNAAATTPATSSRTRTPPSILSPSAGSTPTASPAPSPTPSHSIASTSSAATTSTNSPAHWSDYDDDDEDDDDDDVHADVEEDEDESGILDSDEHDLNDDSDSEVDEFFEAQLKAIVAAVDCAPGYLIPDCASGYLISNTNLGNLLQPQQVPLTDNFVASEDDELGNPTAVDQQQQPQQQLEHHQQQLQQQQHTEDEPSTSAAMLAARRTLQRLRLPSSSSDNEPSSNNQQMTIKSPSEQTTTRSSSNRHRHHSHHHHHHHHSHHHHHHQPTAAVAVAAAQDEQHNNNQPHSHSHSSSHHHHHNHQSHSHPHRANRSTRKRCSQEHCETITTTKTTSGGEQQTEDSLDSSTASSLSDDVSLAMRNTTARLKFKSTENLLHRLFVCIAGVADQLQTNFASDLRQILRSVFLMNMSSAQEDIDIPEKTKESELFEFRASENDVIQESAGSNQSIYSAEEVNPELDNVFNTNTGTNGARHSAGATMQRNNTIDLATVQSSNSGNSSSSNSSSSSSAARSHVARSRSLGDHDQASTSSSQQQQRELQLQLQQQQQQQAQMQQQLQRHRNNSVGSNSPSSASSTSSNSEHNSPVSTRSGSRRRLPSNTTTTLSTSIGTAATTPTGATTTGVTTTTTMSPPAWIPDGKAPRCMSCQTPFTVVRRRHHCRNCGGVFCGVCSNASAPLPKYGLTKAVRVCRECFMREVRQSHSHGQSQSQIHSPTQQAGGRPQAASAS</sequence>
<evidence type="ECO:0000250" key="1"/>
<evidence type="ECO:0000255" key="2">
    <source>
        <dbReference type="PROSITE-ProRule" id="PRU00091"/>
    </source>
</evidence>
<evidence type="ECO:0000256" key="3">
    <source>
        <dbReference type="SAM" id="MobiDB-lite"/>
    </source>
</evidence>
<evidence type="ECO:0000305" key="4"/>